<organism>
    <name type="scientific">Synechococcus sp. (strain CC9605)</name>
    <dbReference type="NCBI Taxonomy" id="110662"/>
    <lineage>
        <taxon>Bacteria</taxon>
        <taxon>Bacillati</taxon>
        <taxon>Cyanobacteriota</taxon>
        <taxon>Cyanophyceae</taxon>
        <taxon>Synechococcales</taxon>
        <taxon>Synechococcaceae</taxon>
        <taxon>Synechococcus</taxon>
    </lineage>
</organism>
<protein>
    <recommendedName>
        <fullName evidence="1">Aspartate--tRNA(Asp/Asn) ligase</fullName>
        <ecNumber evidence="1">6.1.1.23</ecNumber>
    </recommendedName>
    <alternativeName>
        <fullName evidence="1">Aspartyl-tRNA synthetase</fullName>
        <shortName evidence="1">AspRS</shortName>
    </alternativeName>
    <alternativeName>
        <fullName evidence="1">Non-discriminating aspartyl-tRNA synthetase</fullName>
        <shortName evidence="1">ND-AspRS</shortName>
    </alternativeName>
</protein>
<name>SYDND_SYNSC</name>
<dbReference type="EC" id="6.1.1.23" evidence="1"/>
<dbReference type="EMBL" id="CP000110">
    <property type="protein sequence ID" value="ABB36323.1"/>
    <property type="molecule type" value="Genomic_DNA"/>
</dbReference>
<dbReference type="RefSeq" id="WP_011365518.1">
    <property type="nucleotide sequence ID" value="NC_007516.1"/>
</dbReference>
<dbReference type="SMR" id="Q3AGF9"/>
<dbReference type="STRING" id="110662.Syncc9605_2595"/>
<dbReference type="KEGG" id="syd:Syncc9605_2595"/>
<dbReference type="eggNOG" id="COG0173">
    <property type="taxonomic scope" value="Bacteria"/>
</dbReference>
<dbReference type="HOGENOM" id="CLU_014330_3_2_3"/>
<dbReference type="OrthoDB" id="9802326at2"/>
<dbReference type="GO" id="GO:0005737">
    <property type="term" value="C:cytoplasm"/>
    <property type="evidence" value="ECO:0007669"/>
    <property type="project" value="UniProtKB-SubCell"/>
</dbReference>
<dbReference type="GO" id="GO:0004815">
    <property type="term" value="F:aspartate-tRNA ligase activity"/>
    <property type="evidence" value="ECO:0007669"/>
    <property type="project" value="UniProtKB-UniRule"/>
</dbReference>
<dbReference type="GO" id="GO:0050560">
    <property type="term" value="F:aspartate-tRNA(Asn) ligase activity"/>
    <property type="evidence" value="ECO:0007669"/>
    <property type="project" value="UniProtKB-EC"/>
</dbReference>
<dbReference type="GO" id="GO:0005524">
    <property type="term" value="F:ATP binding"/>
    <property type="evidence" value="ECO:0007669"/>
    <property type="project" value="UniProtKB-UniRule"/>
</dbReference>
<dbReference type="GO" id="GO:0003676">
    <property type="term" value="F:nucleic acid binding"/>
    <property type="evidence" value="ECO:0007669"/>
    <property type="project" value="InterPro"/>
</dbReference>
<dbReference type="GO" id="GO:0006422">
    <property type="term" value="P:aspartyl-tRNA aminoacylation"/>
    <property type="evidence" value="ECO:0007669"/>
    <property type="project" value="UniProtKB-UniRule"/>
</dbReference>
<dbReference type="CDD" id="cd00777">
    <property type="entry name" value="AspRS_core"/>
    <property type="match status" value="1"/>
</dbReference>
<dbReference type="CDD" id="cd04317">
    <property type="entry name" value="EcAspRS_like_N"/>
    <property type="match status" value="1"/>
</dbReference>
<dbReference type="Gene3D" id="3.30.930.10">
    <property type="entry name" value="Bira Bifunctional Protein, Domain 2"/>
    <property type="match status" value="1"/>
</dbReference>
<dbReference type="Gene3D" id="3.30.1360.30">
    <property type="entry name" value="GAD-like domain"/>
    <property type="match status" value="1"/>
</dbReference>
<dbReference type="Gene3D" id="2.40.50.140">
    <property type="entry name" value="Nucleic acid-binding proteins"/>
    <property type="match status" value="1"/>
</dbReference>
<dbReference type="HAMAP" id="MF_00044">
    <property type="entry name" value="Asp_tRNA_synth_type1"/>
    <property type="match status" value="1"/>
</dbReference>
<dbReference type="InterPro" id="IPR004364">
    <property type="entry name" value="Aa-tRNA-synt_II"/>
</dbReference>
<dbReference type="InterPro" id="IPR006195">
    <property type="entry name" value="aa-tRNA-synth_II"/>
</dbReference>
<dbReference type="InterPro" id="IPR045864">
    <property type="entry name" value="aa-tRNA-synth_II/BPL/LPL"/>
</dbReference>
<dbReference type="InterPro" id="IPR004524">
    <property type="entry name" value="Asp-tRNA-ligase_1"/>
</dbReference>
<dbReference type="InterPro" id="IPR047089">
    <property type="entry name" value="Asp-tRNA-ligase_1_N"/>
</dbReference>
<dbReference type="InterPro" id="IPR002312">
    <property type="entry name" value="Asp/Asn-tRNA-synth_IIb"/>
</dbReference>
<dbReference type="InterPro" id="IPR047090">
    <property type="entry name" value="AspRS_core"/>
</dbReference>
<dbReference type="InterPro" id="IPR004115">
    <property type="entry name" value="GAD-like_sf"/>
</dbReference>
<dbReference type="InterPro" id="IPR029351">
    <property type="entry name" value="GAD_dom"/>
</dbReference>
<dbReference type="InterPro" id="IPR012340">
    <property type="entry name" value="NA-bd_OB-fold"/>
</dbReference>
<dbReference type="InterPro" id="IPR004365">
    <property type="entry name" value="NA-bd_OB_tRNA"/>
</dbReference>
<dbReference type="NCBIfam" id="TIGR00459">
    <property type="entry name" value="aspS_bact"/>
    <property type="match status" value="1"/>
</dbReference>
<dbReference type="NCBIfam" id="NF001750">
    <property type="entry name" value="PRK00476.1"/>
    <property type="match status" value="1"/>
</dbReference>
<dbReference type="PANTHER" id="PTHR22594:SF5">
    <property type="entry name" value="ASPARTATE--TRNA LIGASE, MITOCHONDRIAL"/>
    <property type="match status" value="1"/>
</dbReference>
<dbReference type="PANTHER" id="PTHR22594">
    <property type="entry name" value="ASPARTYL/LYSYL-TRNA SYNTHETASE"/>
    <property type="match status" value="1"/>
</dbReference>
<dbReference type="Pfam" id="PF02938">
    <property type="entry name" value="GAD"/>
    <property type="match status" value="1"/>
</dbReference>
<dbReference type="Pfam" id="PF00152">
    <property type="entry name" value="tRNA-synt_2"/>
    <property type="match status" value="1"/>
</dbReference>
<dbReference type="Pfam" id="PF01336">
    <property type="entry name" value="tRNA_anti-codon"/>
    <property type="match status" value="1"/>
</dbReference>
<dbReference type="PRINTS" id="PR01042">
    <property type="entry name" value="TRNASYNTHASP"/>
</dbReference>
<dbReference type="SUPFAM" id="SSF55681">
    <property type="entry name" value="Class II aaRS and biotin synthetases"/>
    <property type="match status" value="1"/>
</dbReference>
<dbReference type="SUPFAM" id="SSF55261">
    <property type="entry name" value="GAD domain-like"/>
    <property type="match status" value="1"/>
</dbReference>
<dbReference type="SUPFAM" id="SSF50249">
    <property type="entry name" value="Nucleic acid-binding proteins"/>
    <property type="match status" value="1"/>
</dbReference>
<dbReference type="PROSITE" id="PS50862">
    <property type="entry name" value="AA_TRNA_LIGASE_II"/>
    <property type="match status" value="1"/>
</dbReference>
<evidence type="ECO:0000255" key="1">
    <source>
        <dbReference type="HAMAP-Rule" id="MF_00044"/>
    </source>
</evidence>
<accession>Q3AGF9</accession>
<feature type="chain" id="PRO_0000235566" description="Aspartate--tRNA(Asp/Asn) ligase">
    <location>
        <begin position="1"/>
        <end position="609"/>
    </location>
</feature>
<feature type="region of interest" description="Aspartate" evidence="1">
    <location>
        <begin position="201"/>
        <end position="204"/>
    </location>
</feature>
<feature type="binding site" evidence="1">
    <location>
        <position position="177"/>
    </location>
    <ligand>
        <name>L-aspartate</name>
        <dbReference type="ChEBI" id="CHEBI:29991"/>
    </ligand>
</feature>
<feature type="binding site" evidence="1">
    <location>
        <begin position="223"/>
        <end position="225"/>
    </location>
    <ligand>
        <name>ATP</name>
        <dbReference type="ChEBI" id="CHEBI:30616"/>
    </ligand>
</feature>
<feature type="binding site" evidence="1">
    <location>
        <position position="223"/>
    </location>
    <ligand>
        <name>L-aspartate</name>
        <dbReference type="ChEBI" id="CHEBI:29991"/>
    </ligand>
</feature>
<feature type="binding site" evidence="1">
    <location>
        <position position="232"/>
    </location>
    <ligand>
        <name>ATP</name>
        <dbReference type="ChEBI" id="CHEBI:30616"/>
    </ligand>
</feature>
<feature type="binding site" evidence="1">
    <location>
        <position position="461"/>
    </location>
    <ligand>
        <name>L-aspartate</name>
        <dbReference type="ChEBI" id="CHEBI:29991"/>
    </ligand>
</feature>
<feature type="binding site" evidence="1">
    <location>
        <position position="499"/>
    </location>
    <ligand>
        <name>ATP</name>
        <dbReference type="ChEBI" id="CHEBI:30616"/>
    </ligand>
</feature>
<feature type="binding site" evidence="1">
    <location>
        <position position="506"/>
    </location>
    <ligand>
        <name>L-aspartate</name>
        <dbReference type="ChEBI" id="CHEBI:29991"/>
    </ligand>
</feature>
<feature type="binding site" evidence="1">
    <location>
        <begin position="551"/>
        <end position="554"/>
    </location>
    <ligand>
        <name>ATP</name>
        <dbReference type="ChEBI" id="CHEBI:30616"/>
    </ligand>
</feature>
<feature type="site" description="Important for tRNA non-discrimination" evidence="1">
    <location>
        <position position="30"/>
    </location>
</feature>
<keyword id="KW-0030">Aminoacyl-tRNA synthetase</keyword>
<keyword id="KW-0067">ATP-binding</keyword>
<keyword id="KW-0963">Cytoplasm</keyword>
<keyword id="KW-0436">Ligase</keyword>
<keyword id="KW-0547">Nucleotide-binding</keyword>
<keyword id="KW-0648">Protein biosynthesis</keyword>
<reference key="1">
    <citation type="submission" date="2005-07" db="EMBL/GenBank/DDBJ databases">
        <title>Complete sequence of Synechococcus sp. CC9605.</title>
        <authorList>
            <consortium name="US DOE Joint Genome Institute"/>
            <person name="Copeland A."/>
            <person name="Lucas S."/>
            <person name="Lapidus A."/>
            <person name="Barry K."/>
            <person name="Detter J.C."/>
            <person name="Glavina T."/>
            <person name="Hammon N."/>
            <person name="Israni S."/>
            <person name="Pitluck S."/>
            <person name="Schmutz J."/>
            <person name="Martinez M."/>
            <person name="Larimer F."/>
            <person name="Land M."/>
            <person name="Kyrpides N."/>
            <person name="Ivanova N."/>
            <person name="Richardson P."/>
        </authorList>
    </citation>
    <scope>NUCLEOTIDE SEQUENCE [LARGE SCALE GENOMIC DNA]</scope>
    <source>
        <strain>CC9605</strain>
    </source>
</reference>
<sequence length="609" mass="67598">MRSNGCGDLREQNIDQQVQLCGWVDRRRDHGGVIFIDLRDRSGTVQITVDPDLGADAFTVAEHLRSETVLQVEGKVRARPGESLNDKLATGAVEVLASGITVLNSVKGNLPFPVSVHDEENTREELRLRHRYLDLRRKRMNDNLRLRAQTIQAARRFLEDAGFIEVETPVLTRSTPEGARDYLLPSRVCGGEWFALPQSPQLFKQLLMVGGIERYYQMARCFRDEDLRADRQPEFTQLDIEMSFMDQEQILELNESLICAIWKTVKGIELPRPFPRITWHDAMEHYGTDRPDTRYGMELTNVSDIVKDMGFKVFSGAVKAGGAVKCIAVPGGNDAVSNVRIKPGGDVFSEAQKAGAGGLAFIRVRDGGEIDTIGAIKDNLSDEQRQELLSRTGAEPGTLLLFGAGDTATVNKALDRVRQYLAKELGMVKADRDNDQWNFLWVVDFPMFEFNGDENRYEALHHPFCAPNAEDLGGDASKWSETLPGARAQAYDLVLNGLELGGGSLRIHDSTLQRQVLQTVGLTLEEAQEQFGFLMDALDVGAPPHGGLAFGVDRMVMLLAGEESIRDTIAFPKTQQARCLMTSAPGGVADKQLEELHVASTWVEPDQED</sequence>
<gene>
    <name evidence="1" type="primary">aspS</name>
    <name type="ordered locus">Syncc9605_2595</name>
</gene>
<comment type="function">
    <text evidence="1">Aspartyl-tRNA synthetase with relaxed tRNA specificity since it is able to aspartylate not only its cognate tRNA(Asp) but also tRNA(Asn). Reaction proceeds in two steps: L-aspartate is first activated by ATP to form Asp-AMP and then transferred to the acceptor end of tRNA(Asp/Asn).</text>
</comment>
<comment type="catalytic activity">
    <reaction evidence="1">
        <text>tRNA(Asx) + L-aspartate + ATP = L-aspartyl-tRNA(Asx) + AMP + diphosphate</text>
        <dbReference type="Rhea" id="RHEA:18349"/>
        <dbReference type="Rhea" id="RHEA-COMP:9710"/>
        <dbReference type="Rhea" id="RHEA-COMP:9711"/>
        <dbReference type="ChEBI" id="CHEBI:29991"/>
        <dbReference type="ChEBI" id="CHEBI:30616"/>
        <dbReference type="ChEBI" id="CHEBI:33019"/>
        <dbReference type="ChEBI" id="CHEBI:78442"/>
        <dbReference type="ChEBI" id="CHEBI:78516"/>
        <dbReference type="ChEBI" id="CHEBI:456215"/>
        <dbReference type="EC" id="6.1.1.23"/>
    </reaction>
</comment>
<comment type="subunit">
    <text evidence="1">Homodimer.</text>
</comment>
<comment type="subcellular location">
    <subcellularLocation>
        <location evidence="1">Cytoplasm</location>
    </subcellularLocation>
</comment>
<comment type="similarity">
    <text evidence="1">Belongs to the class-II aminoacyl-tRNA synthetase family. Type 1 subfamily.</text>
</comment>
<proteinExistence type="inferred from homology"/>